<reference key="1">
    <citation type="journal article" date="2000" name="Nature">
        <title>Sequence and analysis of chromosome 1 of the plant Arabidopsis thaliana.</title>
        <authorList>
            <person name="Theologis A."/>
            <person name="Ecker J.R."/>
            <person name="Palm C.J."/>
            <person name="Federspiel N.A."/>
            <person name="Kaul S."/>
            <person name="White O."/>
            <person name="Alonso J."/>
            <person name="Altafi H."/>
            <person name="Araujo R."/>
            <person name="Bowman C.L."/>
            <person name="Brooks S.Y."/>
            <person name="Buehler E."/>
            <person name="Chan A."/>
            <person name="Chao Q."/>
            <person name="Chen H."/>
            <person name="Cheuk R.F."/>
            <person name="Chin C.W."/>
            <person name="Chung M.K."/>
            <person name="Conn L."/>
            <person name="Conway A.B."/>
            <person name="Conway A.R."/>
            <person name="Creasy T.H."/>
            <person name="Dewar K."/>
            <person name="Dunn P."/>
            <person name="Etgu P."/>
            <person name="Feldblyum T.V."/>
            <person name="Feng J.-D."/>
            <person name="Fong B."/>
            <person name="Fujii C.Y."/>
            <person name="Gill J.E."/>
            <person name="Goldsmith A.D."/>
            <person name="Haas B."/>
            <person name="Hansen N.F."/>
            <person name="Hughes B."/>
            <person name="Huizar L."/>
            <person name="Hunter J.L."/>
            <person name="Jenkins J."/>
            <person name="Johnson-Hopson C."/>
            <person name="Khan S."/>
            <person name="Khaykin E."/>
            <person name="Kim C.J."/>
            <person name="Koo H.L."/>
            <person name="Kremenetskaia I."/>
            <person name="Kurtz D.B."/>
            <person name="Kwan A."/>
            <person name="Lam B."/>
            <person name="Langin-Hooper S."/>
            <person name="Lee A."/>
            <person name="Lee J.M."/>
            <person name="Lenz C.A."/>
            <person name="Li J.H."/>
            <person name="Li Y.-P."/>
            <person name="Lin X."/>
            <person name="Liu S.X."/>
            <person name="Liu Z.A."/>
            <person name="Luros J.S."/>
            <person name="Maiti R."/>
            <person name="Marziali A."/>
            <person name="Militscher J."/>
            <person name="Miranda M."/>
            <person name="Nguyen M."/>
            <person name="Nierman W.C."/>
            <person name="Osborne B.I."/>
            <person name="Pai G."/>
            <person name="Peterson J."/>
            <person name="Pham P.K."/>
            <person name="Rizzo M."/>
            <person name="Rooney T."/>
            <person name="Rowley D."/>
            <person name="Sakano H."/>
            <person name="Salzberg S.L."/>
            <person name="Schwartz J.R."/>
            <person name="Shinn P."/>
            <person name="Southwick A.M."/>
            <person name="Sun H."/>
            <person name="Tallon L.J."/>
            <person name="Tambunga G."/>
            <person name="Toriumi M.J."/>
            <person name="Town C.D."/>
            <person name="Utterback T."/>
            <person name="Van Aken S."/>
            <person name="Vaysberg M."/>
            <person name="Vysotskaia V.S."/>
            <person name="Walker M."/>
            <person name="Wu D."/>
            <person name="Yu G."/>
            <person name="Fraser C.M."/>
            <person name="Venter J.C."/>
            <person name="Davis R.W."/>
        </authorList>
    </citation>
    <scope>NUCLEOTIDE SEQUENCE [LARGE SCALE GENOMIC DNA]</scope>
    <source>
        <strain>cv. Columbia</strain>
    </source>
</reference>
<reference key="2">
    <citation type="journal article" date="2017" name="Plant J.">
        <title>Araport11: a complete reannotation of the Arabidopsis thaliana reference genome.</title>
        <authorList>
            <person name="Cheng C.Y."/>
            <person name="Krishnakumar V."/>
            <person name="Chan A.P."/>
            <person name="Thibaud-Nissen F."/>
            <person name="Schobel S."/>
            <person name="Town C.D."/>
        </authorList>
    </citation>
    <scope>GENOME REANNOTATION</scope>
    <source>
        <strain>cv. Columbia</strain>
    </source>
</reference>
<reference key="3">
    <citation type="journal article" date="2017" name="Plant Physiol.">
        <title>Three pectin methyl esterase inhibitors protect cell wall integrity for immunity to Botrytis.</title>
        <authorList>
            <person name="Lionetti V."/>
            <person name="Fabri E."/>
            <person name="De Caroli M."/>
            <person name="Hansen A.R."/>
            <person name="Willats W.G."/>
            <person name="Piro G."/>
            <person name="Bellincampi D."/>
        </authorList>
    </citation>
    <scope>FUNCTION</scope>
    <scope>INDUCTION</scope>
    <scope>DISRUPTION PHENOTYPE</scope>
</reference>
<proteinExistence type="evidence at transcript level"/>
<sequence length="312" mass="32354">MNILSQTQILHLSIAILLFITTSSSSLSPSSSSPSLSPSPPSSSPSSAPPSSLSPSSPPPLSLSPSSPPPPPPSSSPLSSLSPSLSPSPPSSSPSSAPPSSLSPSSPPPLSLSPSSPPPPPPSSSPLSSLSPSSSSSTYSNQTNLDYIKTSCNITLYKTICYNSLSPYASTIRSNPQKLAVIALNLTLSSAKSASKFVKNISHGGGLTRLEVVAVADCVEEIGDSVTSLQDSIRELDSINYKDSAKFEMVMSDVETWVSAALTNDDTCMDGFSLVKTAVKDLVRRHVVEVARLTSNALALINMYASTQENFS</sequence>
<keyword id="KW-0052">Apoplast</keyword>
<keyword id="KW-1015">Disulfide bond</keyword>
<keyword id="KW-0325">Glycoprotein</keyword>
<keyword id="KW-1185">Reference proteome</keyword>
<keyword id="KW-0964">Secreted</keyword>
<keyword id="KW-0732">Signal</keyword>
<evidence type="ECO:0000250" key="1">
    <source>
        <dbReference type="UniProtKB" id="Q9LNF2"/>
    </source>
</evidence>
<evidence type="ECO:0000250" key="2">
    <source>
        <dbReference type="UniProtKB" id="Q9STY5"/>
    </source>
</evidence>
<evidence type="ECO:0000255" key="3"/>
<evidence type="ECO:0000255" key="4">
    <source>
        <dbReference type="PROSITE-ProRule" id="PRU00498"/>
    </source>
</evidence>
<evidence type="ECO:0000256" key="5">
    <source>
        <dbReference type="SAM" id="MobiDB-lite"/>
    </source>
</evidence>
<evidence type="ECO:0000269" key="6">
    <source>
    </source>
</evidence>
<evidence type="ECO:0000303" key="7">
    <source>
    </source>
</evidence>
<evidence type="ECO:0000305" key="8"/>
<evidence type="ECO:0000312" key="9">
    <source>
        <dbReference type="Araport" id="AT1G62760"/>
    </source>
</evidence>
<evidence type="ECO:0000312" key="10">
    <source>
        <dbReference type="EMBL" id="AAF19547.1"/>
    </source>
</evidence>
<comment type="function">
    <text evidence="6">Pectin methylesterase (PME) inhibitor involved in the maintenance of cell wall integrity in response to necrotrophic pathogens. Modulates PME activity and pectin methylesterification during infection by Botrytis cinerea and contributes to resistance against the pathogen.</text>
</comment>
<comment type="subcellular location">
    <subcellularLocation>
        <location evidence="2">Secreted</location>
        <location evidence="2">Extracellular space</location>
        <location evidence="2">Apoplast</location>
    </subcellularLocation>
</comment>
<comment type="induction">
    <text evidence="6">Induced in leaves during infection by Botrytis cinerea.</text>
</comment>
<comment type="disruption phenotype">
    <text evidence="6">No visible phenotype under normal growth conditions, but mutant plants have enhanced susceptibility to infection by the necrotrophic pathogen Botrytis cinerea.</text>
</comment>
<comment type="similarity">
    <text evidence="8">Belongs to the PMEI family.</text>
</comment>
<dbReference type="EMBL" id="AC007190">
    <property type="protein sequence ID" value="AAF19547.1"/>
    <property type="molecule type" value="Genomic_DNA"/>
</dbReference>
<dbReference type="EMBL" id="CP002684">
    <property type="protein sequence ID" value="AEE34001.1"/>
    <property type="molecule type" value="Genomic_DNA"/>
</dbReference>
<dbReference type="RefSeq" id="NP_176463.2">
    <property type="nucleotide sequence ID" value="NM_104953.3"/>
</dbReference>
<dbReference type="SMR" id="Q9SI74"/>
<dbReference type="FunCoup" id="Q9SI74">
    <property type="interactions" value="4"/>
</dbReference>
<dbReference type="STRING" id="3702.Q9SI74"/>
<dbReference type="GlyCosmos" id="Q9SI74">
    <property type="glycosylation" value="4 sites, No reported glycans"/>
</dbReference>
<dbReference type="GlyGen" id="Q9SI74">
    <property type="glycosylation" value="4 sites"/>
</dbReference>
<dbReference type="PaxDb" id="3702-AT1G62760.1"/>
<dbReference type="ProteomicsDB" id="234748"/>
<dbReference type="EnsemblPlants" id="AT1G62760.1">
    <property type="protein sequence ID" value="AT1G62760.1"/>
    <property type="gene ID" value="AT1G62760"/>
</dbReference>
<dbReference type="GeneID" id="842574"/>
<dbReference type="Gramene" id="AT1G62760.1">
    <property type="protein sequence ID" value="AT1G62760.1"/>
    <property type="gene ID" value="AT1G62760"/>
</dbReference>
<dbReference type="KEGG" id="ath:AT1G62760"/>
<dbReference type="Araport" id="AT1G62760"/>
<dbReference type="TAIR" id="AT1G62760">
    <property type="gene designation" value="ATPMEI10"/>
</dbReference>
<dbReference type="eggNOG" id="ENOG502S0CF">
    <property type="taxonomic scope" value="Eukaryota"/>
</dbReference>
<dbReference type="HOGENOM" id="CLU_892393_0_0_1"/>
<dbReference type="InParanoid" id="Q9SI74"/>
<dbReference type="OMA" id="EAASHAM"/>
<dbReference type="PhylomeDB" id="Q9SI74"/>
<dbReference type="PRO" id="PR:Q9SI74"/>
<dbReference type="Proteomes" id="UP000006548">
    <property type="component" value="Chromosome 1"/>
</dbReference>
<dbReference type="ExpressionAtlas" id="Q9SI74">
    <property type="expression patterns" value="baseline and differential"/>
</dbReference>
<dbReference type="GO" id="GO:0048046">
    <property type="term" value="C:apoplast"/>
    <property type="evidence" value="ECO:0007669"/>
    <property type="project" value="UniProtKB-SubCell"/>
</dbReference>
<dbReference type="GO" id="GO:0046910">
    <property type="term" value="F:pectinesterase inhibitor activity"/>
    <property type="evidence" value="ECO:0000314"/>
    <property type="project" value="UniProtKB"/>
</dbReference>
<dbReference type="GO" id="GO:0071669">
    <property type="term" value="P:plant-type cell wall organization or biogenesis"/>
    <property type="evidence" value="ECO:0000315"/>
    <property type="project" value="UniProtKB"/>
</dbReference>
<dbReference type="CDD" id="cd15798">
    <property type="entry name" value="PMEI-like_3"/>
    <property type="match status" value="1"/>
</dbReference>
<dbReference type="FunFam" id="1.20.140.40:FF:000006">
    <property type="entry name" value="Pectinesterase inhibitor 3"/>
    <property type="match status" value="1"/>
</dbReference>
<dbReference type="Gene3D" id="1.20.140.40">
    <property type="entry name" value="Invertase/pectin methylesterase inhibitor family protein"/>
    <property type="match status" value="1"/>
</dbReference>
<dbReference type="InterPro" id="IPR035513">
    <property type="entry name" value="Invertase/methylesterase_inhib"/>
</dbReference>
<dbReference type="InterPro" id="IPR006501">
    <property type="entry name" value="Pectinesterase_inhib_dom"/>
</dbReference>
<dbReference type="InterPro" id="IPR051955">
    <property type="entry name" value="PME_Inhibitor"/>
</dbReference>
<dbReference type="NCBIfam" id="TIGR01614">
    <property type="entry name" value="PME_inhib"/>
    <property type="match status" value="1"/>
</dbReference>
<dbReference type="PANTHER" id="PTHR31080:SF118">
    <property type="entry name" value="PECTINESTERASE INHIBITOR 10"/>
    <property type="match status" value="1"/>
</dbReference>
<dbReference type="PANTHER" id="PTHR31080">
    <property type="entry name" value="PECTINESTERASE INHIBITOR-LIKE"/>
    <property type="match status" value="1"/>
</dbReference>
<dbReference type="Pfam" id="PF04043">
    <property type="entry name" value="PMEI"/>
    <property type="match status" value="1"/>
</dbReference>
<dbReference type="SMART" id="SM00856">
    <property type="entry name" value="PMEI"/>
    <property type="match status" value="1"/>
</dbReference>
<dbReference type="SUPFAM" id="SSF101148">
    <property type="entry name" value="Plant invertase/pectin methylesterase inhibitor"/>
    <property type="match status" value="1"/>
</dbReference>
<gene>
    <name evidence="7" type="primary">PMEI10</name>
    <name evidence="9" type="ordered locus">At1g62760</name>
    <name evidence="10" type="ORF">F23N19.12</name>
</gene>
<organism>
    <name type="scientific">Arabidopsis thaliana</name>
    <name type="common">Mouse-ear cress</name>
    <dbReference type="NCBI Taxonomy" id="3702"/>
    <lineage>
        <taxon>Eukaryota</taxon>
        <taxon>Viridiplantae</taxon>
        <taxon>Streptophyta</taxon>
        <taxon>Embryophyta</taxon>
        <taxon>Tracheophyta</taxon>
        <taxon>Spermatophyta</taxon>
        <taxon>Magnoliopsida</taxon>
        <taxon>eudicotyledons</taxon>
        <taxon>Gunneridae</taxon>
        <taxon>Pentapetalae</taxon>
        <taxon>rosids</taxon>
        <taxon>malvids</taxon>
        <taxon>Brassicales</taxon>
        <taxon>Brassicaceae</taxon>
        <taxon>Camelineae</taxon>
        <taxon>Arabidopsis</taxon>
    </lineage>
</organism>
<protein>
    <recommendedName>
        <fullName evidence="8">Pectinesterase inhibitor 10</fullName>
    </recommendedName>
    <alternativeName>
        <fullName evidence="7">Pectin methylesterase inhibitor 10</fullName>
        <shortName evidence="7">AtPMEI10</shortName>
    </alternativeName>
</protein>
<name>PMI10_ARATH</name>
<feature type="signal peptide" evidence="3">
    <location>
        <begin position="1"/>
        <end position="25"/>
    </location>
</feature>
<feature type="chain" id="PRO_5008430293" description="Pectinesterase inhibitor 10">
    <location>
        <begin position="26"/>
        <end position="312"/>
    </location>
</feature>
<feature type="region of interest" description="Disordered" evidence="5">
    <location>
        <begin position="24"/>
        <end position="141"/>
    </location>
</feature>
<feature type="compositionally biased region" description="Low complexity" evidence="5">
    <location>
        <begin position="24"/>
        <end position="36"/>
    </location>
</feature>
<feature type="compositionally biased region" description="Low complexity" evidence="5">
    <location>
        <begin position="44"/>
        <end position="55"/>
    </location>
</feature>
<feature type="compositionally biased region" description="Pro residues" evidence="5">
    <location>
        <begin position="56"/>
        <end position="75"/>
    </location>
</feature>
<feature type="compositionally biased region" description="Low complexity" evidence="5">
    <location>
        <begin position="76"/>
        <end position="85"/>
    </location>
</feature>
<feature type="compositionally biased region" description="Low complexity" evidence="5">
    <location>
        <begin position="93"/>
        <end position="104"/>
    </location>
</feature>
<feature type="compositionally biased region" description="Pro residues" evidence="5">
    <location>
        <begin position="105"/>
        <end position="124"/>
    </location>
</feature>
<feature type="compositionally biased region" description="Low complexity" evidence="5">
    <location>
        <begin position="125"/>
        <end position="137"/>
    </location>
</feature>
<feature type="glycosylation site" description="N-linked (GlcNAc...) asparagine" evidence="4">
    <location>
        <position position="141"/>
    </location>
</feature>
<feature type="glycosylation site" description="N-linked (GlcNAc...) asparagine" evidence="4">
    <location>
        <position position="153"/>
    </location>
</feature>
<feature type="glycosylation site" description="N-linked (GlcNAc...) asparagine" evidence="4">
    <location>
        <position position="185"/>
    </location>
</feature>
<feature type="glycosylation site" description="N-linked (GlcNAc...) asparagine" evidence="4">
    <location>
        <position position="200"/>
    </location>
</feature>
<feature type="disulfide bond" evidence="1">
    <location>
        <begin position="152"/>
        <end position="161"/>
    </location>
</feature>
<feature type="disulfide bond" evidence="1">
    <location>
        <begin position="218"/>
        <end position="268"/>
    </location>
</feature>
<accession>Q9SI74</accession>